<dbReference type="EC" id="6.1.1.22" evidence="1"/>
<dbReference type="EMBL" id="CR626927">
    <property type="protein sequence ID" value="CAH09470.1"/>
    <property type="molecule type" value="Genomic_DNA"/>
</dbReference>
<dbReference type="RefSeq" id="WP_005799125.1">
    <property type="nucleotide sequence ID" value="NZ_UFTH01000001.1"/>
</dbReference>
<dbReference type="SMR" id="Q5L8W2"/>
<dbReference type="PaxDb" id="272559-BF9343_3689"/>
<dbReference type="GeneID" id="60370149"/>
<dbReference type="KEGG" id="bfs:BF9343_3689"/>
<dbReference type="eggNOG" id="COG0017">
    <property type="taxonomic scope" value="Bacteria"/>
</dbReference>
<dbReference type="HOGENOM" id="CLU_004553_2_0_10"/>
<dbReference type="Proteomes" id="UP000006731">
    <property type="component" value="Chromosome"/>
</dbReference>
<dbReference type="GO" id="GO:0005737">
    <property type="term" value="C:cytoplasm"/>
    <property type="evidence" value="ECO:0007669"/>
    <property type="project" value="UniProtKB-SubCell"/>
</dbReference>
<dbReference type="GO" id="GO:0004816">
    <property type="term" value="F:asparagine-tRNA ligase activity"/>
    <property type="evidence" value="ECO:0007669"/>
    <property type="project" value="UniProtKB-UniRule"/>
</dbReference>
<dbReference type="GO" id="GO:0005524">
    <property type="term" value="F:ATP binding"/>
    <property type="evidence" value="ECO:0007669"/>
    <property type="project" value="UniProtKB-UniRule"/>
</dbReference>
<dbReference type="GO" id="GO:0003676">
    <property type="term" value="F:nucleic acid binding"/>
    <property type="evidence" value="ECO:0007669"/>
    <property type="project" value="InterPro"/>
</dbReference>
<dbReference type="GO" id="GO:0006421">
    <property type="term" value="P:asparaginyl-tRNA aminoacylation"/>
    <property type="evidence" value="ECO:0007669"/>
    <property type="project" value="UniProtKB-UniRule"/>
</dbReference>
<dbReference type="CDD" id="cd00776">
    <property type="entry name" value="AsxRS_core"/>
    <property type="match status" value="1"/>
</dbReference>
<dbReference type="CDD" id="cd04318">
    <property type="entry name" value="EcAsnRS_like_N"/>
    <property type="match status" value="1"/>
</dbReference>
<dbReference type="FunFam" id="3.30.930.10:FF:000016">
    <property type="entry name" value="Asparagine--tRNA ligase"/>
    <property type="match status" value="1"/>
</dbReference>
<dbReference type="Gene3D" id="3.30.930.10">
    <property type="entry name" value="Bira Bifunctional Protein, Domain 2"/>
    <property type="match status" value="1"/>
</dbReference>
<dbReference type="Gene3D" id="2.40.50.140">
    <property type="entry name" value="Nucleic acid-binding proteins"/>
    <property type="match status" value="1"/>
</dbReference>
<dbReference type="HAMAP" id="MF_00534">
    <property type="entry name" value="Asn_tRNA_synth"/>
    <property type="match status" value="1"/>
</dbReference>
<dbReference type="InterPro" id="IPR004364">
    <property type="entry name" value="Aa-tRNA-synt_II"/>
</dbReference>
<dbReference type="InterPro" id="IPR006195">
    <property type="entry name" value="aa-tRNA-synth_II"/>
</dbReference>
<dbReference type="InterPro" id="IPR045864">
    <property type="entry name" value="aa-tRNA-synth_II/BPL/LPL"/>
</dbReference>
<dbReference type="InterPro" id="IPR004522">
    <property type="entry name" value="Asn-tRNA-ligase"/>
</dbReference>
<dbReference type="InterPro" id="IPR002312">
    <property type="entry name" value="Asp/Asn-tRNA-synth_IIb"/>
</dbReference>
<dbReference type="InterPro" id="IPR012340">
    <property type="entry name" value="NA-bd_OB-fold"/>
</dbReference>
<dbReference type="InterPro" id="IPR004365">
    <property type="entry name" value="NA-bd_OB_tRNA"/>
</dbReference>
<dbReference type="NCBIfam" id="TIGR00457">
    <property type="entry name" value="asnS"/>
    <property type="match status" value="1"/>
</dbReference>
<dbReference type="NCBIfam" id="NF003037">
    <property type="entry name" value="PRK03932.1"/>
    <property type="match status" value="1"/>
</dbReference>
<dbReference type="PANTHER" id="PTHR22594:SF34">
    <property type="entry name" value="ASPARAGINE--TRNA LIGASE, MITOCHONDRIAL-RELATED"/>
    <property type="match status" value="1"/>
</dbReference>
<dbReference type="PANTHER" id="PTHR22594">
    <property type="entry name" value="ASPARTYL/LYSYL-TRNA SYNTHETASE"/>
    <property type="match status" value="1"/>
</dbReference>
<dbReference type="Pfam" id="PF00152">
    <property type="entry name" value="tRNA-synt_2"/>
    <property type="match status" value="1"/>
</dbReference>
<dbReference type="Pfam" id="PF01336">
    <property type="entry name" value="tRNA_anti-codon"/>
    <property type="match status" value="1"/>
</dbReference>
<dbReference type="PRINTS" id="PR01042">
    <property type="entry name" value="TRNASYNTHASP"/>
</dbReference>
<dbReference type="SUPFAM" id="SSF55681">
    <property type="entry name" value="Class II aaRS and biotin synthetases"/>
    <property type="match status" value="1"/>
</dbReference>
<dbReference type="SUPFAM" id="SSF50249">
    <property type="entry name" value="Nucleic acid-binding proteins"/>
    <property type="match status" value="1"/>
</dbReference>
<dbReference type="PROSITE" id="PS50862">
    <property type="entry name" value="AA_TRNA_LIGASE_II"/>
    <property type="match status" value="1"/>
</dbReference>
<gene>
    <name evidence="1" type="primary">asnS</name>
    <name type="ordered locus">BF3790</name>
</gene>
<reference key="1">
    <citation type="journal article" date="2005" name="Science">
        <title>Extensive DNA inversions in the B. fragilis genome control variable gene expression.</title>
        <authorList>
            <person name="Cerdeno-Tarraga A.-M."/>
            <person name="Patrick S."/>
            <person name="Crossman L.C."/>
            <person name="Blakely G."/>
            <person name="Abratt V."/>
            <person name="Lennard N."/>
            <person name="Poxton I."/>
            <person name="Duerden B."/>
            <person name="Harris B."/>
            <person name="Quail M.A."/>
            <person name="Barron A."/>
            <person name="Clark L."/>
            <person name="Corton C."/>
            <person name="Doggett J."/>
            <person name="Holden M.T.G."/>
            <person name="Larke N."/>
            <person name="Line A."/>
            <person name="Lord A."/>
            <person name="Norbertczak H."/>
            <person name="Ormond D."/>
            <person name="Price C."/>
            <person name="Rabbinowitsch E."/>
            <person name="Woodward J."/>
            <person name="Barrell B.G."/>
            <person name="Parkhill J."/>
        </authorList>
    </citation>
    <scope>NUCLEOTIDE SEQUENCE [LARGE SCALE GENOMIC DNA]</scope>
    <source>
        <strain>ATCC 25285 / DSM 2151 / CCUG 4856 / JCM 11019 / LMG 10263 / NCTC 9343 / Onslow / VPI 2553 / EN-2</strain>
    </source>
</reference>
<evidence type="ECO:0000255" key="1">
    <source>
        <dbReference type="HAMAP-Rule" id="MF_00534"/>
    </source>
</evidence>
<keyword id="KW-0030">Aminoacyl-tRNA synthetase</keyword>
<keyword id="KW-0067">ATP-binding</keyword>
<keyword id="KW-0963">Cytoplasm</keyword>
<keyword id="KW-0436">Ligase</keyword>
<keyword id="KW-0547">Nucleotide-binding</keyword>
<keyword id="KW-0648">Protein biosynthesis</keyword>
<feature type="chain" id="PRO_1000051377" description="Asparagine--tRNA ligase">
    <location>
        <begin position="1"/>
        <end position="467"/>
    </location>
</feature>
<organism>
    <name type="scientific">Bacteroides fragilis (strain ATCC 25285 / DSM 2151 / CCUG 4856 / JCM 11019 / LMG 10263 / NCTC 9343 / Onslow / VPI 2553 / EN-2)</name>
    <dbReference type="NCBI Taxonomy" id="272559"/>
    <lineage>
        <taxon>Bacteria</taxon>
        <taxon>Pseudomonadati</taxon>
        <taxon>Bacteroidota</taxon>
        <taxon>Bacteroidia</taxon>
        <taxon>Bacteroidales</taxon>
        <taxon>Bacteroidaceae</taxon>
        <taxon>Bacteroides</taxon>
    </lineage>
</organism>
<name>SYN_BACFN</name>
<comment type="catalytic activity">
    <reaction evidence="1">
        <text>tRNA(Asn) + L-asparagine + ATP = L-asparaginyl-tRNA(Asn) + AMP + diphosphate + H(+)</text>
        <dbReference type="Rhea" id="RHEA:11180"/>
        <dbReference type="Rhea" id="RHEA-COMP:9659"/>
        <dbReference type="Rhea" id="RHEA-COMP:9674"/>
        <dbReference type="ChEBI" id="CHEBI:15378"/>
        <dbReference type="ChEBI" id="CHEBI:30616"/>
        <dbReference type="ChEBI" id="CHEBI:33019"/>
        <dbReference type="ChEBI" id="CHEBI:58048"/>
        <dbReference type="ChEBI" id="CHEBI:78442"/>
        <dbReference type="ChEBI" id="CHEBI:78515"/>
        <dbReference type="ChEBI" id="CHEBI:456215"/>
        <dbReference type="EC" id="6.1.1.22"/>
    </reaction>
</comment>
<comment type="subunit">
    <text evidence="1">Homodimer.</text>
</comment>
<comment type="subcellular location">
    <subcellularLocation>
        <location evidence="1">Cytoplasm</location>
    </subcellularLocation>
</comment>
<comment type="similarity">
    <text evidence="1">Belongs to the class-II aminoacyl-tRNA synthetase family.</text>
</comment>
<protein>
    <recommendedName>
        <fullName evidence="1">Asparagine--tRNA ligase</fullName>
        <ecNumber evidence="1">6.1.1.22</ecNumber>
    </recommendedName>
    <alternativeName>
        <fullName evidence="1">Asparaginyl-tRNA synthetase</fullName>
        <shortName evidence="1">AsnRS</shortName>
    </alternativeName>
</protein>
<sequence length="467" mass="53430">MEKISRTKIVDLMKREDFGAMVNVKGWVRTRRGSKQVNFIALNDGSTINNVQVVVDLANFDEEMLKQITTGACLSVNGVLTESVGAGQKAEVQAREIEVLGTCDNTYPLQKKGHSMEFLREIAHLRPRTNTFGAVFRIRHNMAIAIHKFFHEKGFFYFHTPIITASDCEGAGQMFQVTTMNLYDLKKDANGSIVYDDDFFGKQASLTVSGQLEGELAATALGAIYTFGPTFRAENSNTPRHLAEFWMIEPEVAFNEIQENMDLAEEFIKYCVRWALDNCADDVKFLNDMFDKGLIERLEGVLKEDFVRLPYTEGIKILEEAVAKGHKFEFPVYWGVDLASEHERYLVEDHFKRPVILTDYPKEIKAFYMKQNEDGKTVRAMDVLFPKIGEIIGGSERESDYNKLMTRIEEMHIPMKDMWWYLDTRKFGTCPHSGFGLGFERLLLFVTGMSNIRDVIPFPRTPRNADF</sequence>
<proteinExistence type="inferred from homology"/>
<accession>Q5L8W2</accession>